<protein>
    <recommendedName>
        <fullName>Rubredoxin 3</fullName>
    </recommendedName>
</protein>
<keyword id="KW-0249">Electron transport</keyword>
<keyword id="KW-0408">Iron</keyword>
<keyword id="KW-0479">Metal-binding</keyword>
<keyword id="KW-0813">Transport</keyword>
<sequence>MSSYRCPVCEYVYDESKGAPREGFPAGTPWDAVPDDWCCPDCGVREKLDFEPMPATAGSES</sequence>
<proteinExistence type="inferred from homology"/>
<feature type="chain" id="PRO_0000135047" description="Rubredoxin 3">
    <location>
        <begin position="1"/>
        <end position="61"/>
    </location>
</feature>
<feature type="domain" description="Rubredoxin-like" evidence="2">
    <location>
        <begin position="1"/>
        <end position="53"/>
    </location>
</feature>
<feature type="binding site" evidence="2">
    <location>
        <position position="6"/>
    </location>
    <ligand>
        <name>Fe cation</name>
        <dbReference type="ChEBI" id="CHEBI:24875"/>
    </ligand>
</feature>
<feature type="binding site" evidence="2">
    <location>
        <position position="9"/>
    </location>
    <ligand>
        <name>Fe cation</name>
        <dbReference type="ChEBI" id="CHEBI:24875"/>
    </ligand>
</feature>
<feature type="binding site" evidence="2">
    <location>
        <position position="39"/>
    </location>
    <ligand>
        <name>Fe cation</name>
        <dbReference type="ChEBI" id="CHEBI:24875"/>
    </ligand>
</feature>
<feature type="binding site" evidence="2">
    <location>
        <position position="42"/>
    </location>
    <ligand>
        <name>Fe cation</name>
        <dbReference type="ChEBI" id="CHEBI:24875"/>
    </ligand>
</feature>
<evidence type="ECO:0000250" key="1"/>
<evidence type="ECO:0000255" key="2">
    <source>
        <dbReference type="PROSITE-ProRule" id="PRU00241"/>
    </source>
</evidence>
<evidence type="ECO:0000305" key="3"/>
<comment type="function">
    <text evidence="1">Involved in the hydrocarbon hydroxylating system, which transfers electrons from NADH to rubredoxin reductase and then through rubredoxin to alkane 1 monooxygenase.</text>
</comment>
<comment type="cofactor">
    <cofactor evidence="1">
        <name>Fe(3+)</name>
        <dbReference type="ChEBI" id="CHEBI:29034"/>
    </cofactor>
    <text evidence="1">Binds 1 Fe(3+) ion per subunit.</text>
</comment>
<comment type="similarity">
    <text evidence="3">Belongs to the rubredoxin family.</text>
</comment>
<reference key="1">
    <citation type="submission" date="2001-06" db="EMBL/GenBank/DDBJ databases">
        <title>Cloning and characterization of multiple alkane hydroxylase systems in Rhodococcus spp. strains Q15 and 16531.</title>
        <authorList>
            <person name="Whyte L.G."/>
            <person name="Smits T.H."/>
            <person name="Labbe D."/>
            <person name="Witholt B."/>
            <person name="Greer C.W."/>
            <person name="Van Beilen J.B."/>
        </authorList>
    </citation>
    <scope>NUCLEOTIDE SEQUENCE [GENOMIC DNA]</scope>
</reference>
<accession>P0A4E9</accession>
<accession>Q9AE67</accession>
<dbReference type="EMBL" id="AF388182">
    <property type="protein sequence ID" value="AAK97455.1"/>
    <property type="molecule type" value="Genomic_DNA"/>
</dbReference>
<dbReference type="SMR" id="P0A4E9"/>
<dbReference type="GO" id="GO:0009055">
    <property type="term" value="F:electron transfer activity"/>
    <property type="evidence" value="ECO:0007669"/>
    <property type="project" value="TreeGrafter"/>
</dbReference>
<dbReference type="GO" id="GO:0005506">
    <property type="term" value="F:iron ion binding"/>
    <property type="evidence" value="ECO:0007669"/>
    <property type="project" value="InterPro"/>
</dbReference>
<dbReference type="GO" id="GO:0043448">
    <property type="term" value="P:alkane catabolic process"/>
    <property type="evidence" value="ECO:0007669"/>
    <property type="project" value="TreeGrafter"/>
</dbReference>
<dbReference type="CDD" id="cd00730">
    <property type="entry name" value="rubredoxin"/>
    <property type="match status" value="1"/>
</dbReference>
<dbReference type="FunFam" id="2.20.28.10:FF:000001">
    <property type="entry name" value="Rubredoxin"/>
    <property type="match status" value="1"/>
</dbReference>
<dbReference type="Gene3D" id="2.20.28.10">
    <property type="match status" value="1"/>
</dbReference>
<dbReference type="InterPro" id="IPR024934">
    <property type="entry name" value="Rubredoxin-like_dom"/>
</dbReference>
<dbReference type="InterPro" id="IPR024935">
    <property type="entry name" value="Rubredoxin_dom"/>
</dbReference>
<dbReference type="InterPro" id="IPR050526">
    <property type="entry name" value="Rubredoxin_ET"/>
</dbReference>
<dbReference type="InterPro" id="IPR018527">
    <property type="entry name" value="Rubredoxin_Fe_BS"/>
</dbReference>
<dbReference type="PANTHER" id="PTHR47627">
    <property type="entry name" value="RUBREDOXIN"/>
    <property type="match status" value="1"/>
</dbReference>
<dbReference type="PANTHER" id="PTHR47627:SF1">
    <property type="entry name" value="RUBREDOXIN-1-RELATED"/>
    <property type="match status" value="1"/>
</dbReference>
<dbReference type="Pfam" id="PF00301">
    <property type="entry name" value="Rubredoxin"/>
    <property type="match status" value="1"/>
</dbReference>
<dbReference type="PRINTS" id="PR00163">
    <property type="entry name" value="RUBREDOXIN"/>
</dbReference>
<dbReference type="SUPFAM" id="SSF57802">
    <property type="entry name" value="Rubredoxin-like"/>
    <property type="match status" value="1"/>
</dbReference>
<dbReference type="PROSITE" id="PS00202">
    <property type="entry name" value="RUBREDOXIN"/>
    <property type="match status" value="1"/>
</dbReference>
<dbReference type="PROSITE" id="PS50903">
    <property type="entry name" value="RUBREDOXIN_LIKE"/>
    <property type="match status" value="1"/>
</dbReference>
<organism>
    <name type="scientific">Rhodococcus sp. (strain Q15)</name>
    <dbReference type="NCBI Taxonomy" id="72804"/>
    <lineage>
        <taxon>Bacteria</taxon>
        <taxon>Bacillati</taxon>
        <taxon>Actinomycetota</taxon>
        <taxon>Actinomycetes</taxon>
        <taxon>Mycobacteriales</taxon>
        <taxon>Nocardiaceae</taxon>
        <taxon>Rhodococcus</taxon>
    </lineage>
</organism>
<gene>
    <name type="primary">rubA3</name>
</gene>
<name>RUBR3_RHOSQ</name>